<evidence type="ECO:0000250" key="1"/>
<evidence type="ECO:0000305" key="2"/>
<dbReference type="EC" id="1.14.-.-"/>
<dbReference type="EMBL" id="Z48717">
    <property type="protein sequence ID" value="CAA88604.1"/>
    <property type="molecule type" value="Genomic_DNA"/>
</dbReference>
<dbReference type="PIR" id="T24778">
    <property type="entry name" value="T24778"/>
</dbReference>
<dbReference type="RefSeq" id="NP_496112.1">
    <property type="nucleotide sequence ID" value="NM_063711.6"/>
</dbReference>
<dbReference type="SMR" id="Q27514"/>
<dbReference type="FunCoup" id="Q27514">
    <property type="interactions" value="122"/>
</dbReference>
<dbReference type="STRING" id="6239.T10B9.2.1"/>
<dbReference type="PaxDb" id="6239-T10B9.2"/>
<dbReference type="PeptideAtlas" id="Q27514"/>
<dbReference type="EnsemblMetazoa" id="T10B9.2.1">
    <property type="protein sequence ID" value="T10B9.2.1"/>
    <property type="gene ID" value="WBGene00011672"/>
</dbReference>
<dbReference type="GeneID" id="188356"/>
<dbReference type="KEGG" id="cel:CELE_T10B9.2"/>
<dbReference type="UCSC" id="T10B9.2">
    <property type="organism name" value="c. elegans"/>
</dbReference>
<dbReference type="AGR" id="WB:WBGene00011672"/>
<dbReference type="CTD" id="188356"/>
<dbReference type="WormBase" id="T10B9.2">
    <property type="protein sequence ID" value="CE01656"/>
    <property type="gene ID" value="WBGene00011672"/>
    <property type="gene designation" value="cyp-13A5"/>
</dbReference>
<dbReference type="eggNOG" id="KOG0158">
    <property type="taxonomic scope" value="Eukaryota"/>
</dbReference>
<dbReference type="GeneTree" id="ENSGT00970000195979"/>
<dbReference type="HOGENOM" id="CLU_001570_5_2_1"/>
<dbReference type="InParanoid" id="Q27514"/>
<dbReference type="OMA" id="WIPENTS"/>
<dbReference type="OrthoDB" id="2789670at2759"/>
<dbReference type="PhylomeDB" id="Q27514"/>
<dbReference type="PRO" id="PR:Q27514"/>
<dbReference type="Proteomes" id="UP000001940">
    <property type="component" value="Chromosome II"/>
</dbReference>
<dbReference type="Bgee" id="WBGene00011672">
    <property type="expression patterns" value="Expressed in adult organism and 2 other cell types or tissues"/>
</dbReference>
<dbReference type="GO" id="GO:0020037">
    <property type="term" value="F:heme binding"/>
    <property type="evidence" value="ECO:0007669"/>
    <property type="project" value="InterPro"/>
</dbReference>
<dbReference type="GO" id="GO:0005506">
    <property type="term" value="F:iron ion binding"/>
    <property type="evidence" value="ECO:0007669"/>
    <property type="project" value="InterPro"/>
</dbReference>
<dbReference type="GO" id="GO:0004497">
    <property type="term" value="F:monooxygenase activity"/>
    <property type="evidence" value="ECO:0007669"/>
    <property type="project" value="UniProtKB-KW"/>
</dbReference>
<dbReference type="GO" id="GO:0016705">
    <property type="term" value="F:oxidoreductase activity, acting on paired donors, with incorporation or reduction of molecular oxygen"/>
    <property type="evidence" value="ECO:0007669"/>
    <property type="project" value="InterPro"/>
</dbReference>
<dbReference type="CDD" id="cd11055">
    <property type="entry name" value="CYP3A-like"/>
    <property type="match status" value="1"/>
</dbReference>
<dbReference type="FunFam" id="1.10.630.10:FF:000182">
    <property type="entry name" value="Cytochrome P450 3A4"/>
    <property type="match status" value="1"/>
</dbReference>
<dbReference type="Gene3D" id="1.10.630.10">
    <property type="entry name" value="Cytochrome P450"/>
    <property type="match status" value="1"/>
</dbReference>
<dbReference type="InterPro" id="IPR001128">
    <property type="entry name" value="Cyt_P450"/>
</dbReference>
<dbReference type="InterPro" id="IPR017972">
    <property type="entry name" value="Cyt_P450_CS"/>
</dbReference>
<dbReference type="InterPro" id="IPR002401">
    <property type="entry name" value="Cyt_P450_E_grp-I"/>
</dbReference>
<dbReference type="InterPro" id="IPR036396">
    <property type="entry name" value="Cyt_P450_sf"/>
</dbReference>
<dbReference type="InterPro" id="IPR050705">
    <property type="entry name" value="Cytochrome_P450_3A"/>
</dbReference>
<dbReference type="PANTHER" id="PTHR24302">
    <property type="entry name" value="CYTOCHROME P450 FAMILY 3"/>
    <property type="match status" value="1"/>
</dbReference>
<dbReference type="PANTHER" id="PTHR24302:SF15">
    <property type="entry name" value="FATTY-ACID PEROXYGENASE"/>
    <property type="match status" value="1"/>
</dbReference>
<dbReference type="Pfam" id="PF00067">
    <property type="entry name" value="p450"/>
    <property type="match status" value="1"/>
</dbReference>
<dbReference type="PRINTS" id="PR00463">
    <property type="entry name" value="EP450I"/>
</dbReference>
<dbReference type="PRINTS" id="PR00385">
    <property type="entry name" value="P450"/>
</dbReference>
<dbReference type="SUPFAM" id="SSF48264">
    <property type="entry name" value="Cytochrome P450"/>
    <property type="match status" value="1"/>
</dbReference>
<dbReference type="PROSITE" id="PS00086">
    <property type="entry name" value="CYTOCHROME_P450"/>
    <property type="match status" value="1"/>
</dbReference>
<comment type="function">
    <text>Cytochromes P450 are a group of heme-thiolate monooxygenases. They oxidize a variety of structurally unrelated compounds, including steroids, fatty acids, and xenobiotics.</text>
</comment>
<comment type="cofactor">
    <cofactor evidence="1">
        <name>heme</name>
        <dbReference type="ChEBI" id="CHEBI:30413"/>
    </cofactor>
</comment>
<comment type="similarity">
    <text evidence="2">Belongs to the cytochrome P450 family.</text>
</comment>
<name>C13A5_CAEEL</name>
<feature type="chain" id="PRO_0000052265" description="Putative cytochrome P450 CYP13A5">
    <location>
        <begin position="1"/>
        <end position="520"/>
    </location>
</feature>
<feature type="binding site" description="axial binding residue" evidence="1">
    <location>
        <position position="464"/>
    </location>
    <ligand>
        <name>heme</name>
        <dbReference type="ChEBI" id="CHEBI:30413"/>
    </ligand>
    <ligandPart>
        <name>Fe</name>
        <dbReference type="ChEBI" id="CHEBI:18248"/>
    </ligandPart>
</feature>
<keyword id="KW-0349">Heme</keyword>
<keyword id="KW-0408">Iron</keyword>
<keyword id="KW-0479">Metal-binding</keyword>
<keyword id="KW-0503">Monooxygenase</keyword>
<keyword id="KW-0560">Oxidoreductase</keyword>
<keyword id="KW-1185">Reference proteome</keyword>
<reference key="1">
    <citation type="journal article" date="1998" name="Science">
        <title>Genome sequence of the nematode C. elegans: a platform for investigating biology.</title>
        <authorList>
            <consortium name="The C. elegans sequencing consortium"/>
        </authorList>
    </citation>
    <scope>NUCLEOTIDE SEQUENCE [LARGE SCALE GENOMIC DNA]</scope>
    <source>
        <strain>Bristol N2</strain>
    </source>
</reference>
<accession>Q27514</accession>
<proteinExistence type="inferred from homology"/>
<sequence>MSLSILIAGASFIGLLTYYIWIWSFWIRKGVKGPRGFPFFGVIHEFQDYENPGLLKLGEWTKEYGPIYGITEGVEKTLIVSNPEFVHEVFVKQFDNFYGRKTNPIQGDPNKNKRAHLVSAQGHRWKRLRTLSSPTFSNKNLRKIMSTVEETVVELMRHLDDASAKGKAVDLLDYYQEFTLDIIGRIAMGQTESLMFRNPMLPKVKGIFKDGRKLPFLVSGIFPIAGTMFREFFMRFPSIQPAFDIMSTVEKALNKRLEQRAADEKAGIEPSGEPQDFIDLFLDARANVDFFEEESALGFAKTEIAKVDKQLTFDEIIGQLFVFLLAGYDTTALSLSYSSYLLARHPEIQKKLQEEVDRECPNPEVTFDQISKLKYMECVVKEALRMYPLASIVHNRKCMKETNVLGVQIEKGTNVQVDTWTLHYDPKVWGEDANEFRPERWESGDELFYAKGGYLPFGMGPRICIGMRLAMMEKKMLLTHILKKYTFETSTQTEIPLKLVGSATTAPRSVMLKLTPRHSN</sequence>
<protein>
    <recommendedName>
        <fullName>Putative cytochrome P450 CYP13A5</fullName>
        <ecNumber>1.14.-.-</ecNumber>
    </recommendedName>
</protein>
<organism>
    <name type="scientific">Caenorhabditis elegans</name>
    <dbReference type="NCBI Taxonomy" id="6239"/>
    <lineage>
        <taxon>Eukaryota</taxon>
        <taxon>Metazoa</taxon>
        <taxon>Ecdysozoa</taxon>
        <taxon>Nematoda</taxon>
        <taxon>Chromadorea</taxon>
        <taxon>Rhabditida</taxon>
        <taxon>Rhabditina</taxon>
        <taxon>Rhabditomorpha</taxon>
        <taxon>Rhabditoidea</taxon>
        <taxon>Rhabditidae</taxon>
        <taxon>Peloderinae</taxon>
        <taxon>Caenorhabditis</taxon>
    </lineage>
</organism>
<gene>
    <name type="primary">cyp-13A5</name>
    <name type="synonym">cyp13a5</name>
    <name type="ORF">T10B9.2</name>
</gene>